<sequence>MLQVLAPFYSNLSGLILLPLLGSLIILVIPNSRVRLIRGITIWTSLITFLYSLFFWIRFENDTAKFQFVETIRWLPYSNINFYIGIDGISLFFVILTTFLTPICILVGFYSVKSYKKEYMIAFFICESFLIAVFCSLDLLIFYVFFESVLIPMFIIIGVWGSRQRKIKAAYQFFLYTLMGSLFMLLAILFIFFQTGTTDLQILLTTEFSERRQILLWIAFFASFSVKVPMVPVHIWLPEAHVEAPTAGSVILAGILLKLGTYGFLRFSIPMFPEATLYFTPFIYTLSVIAIIYTSLTTIRQIDLKKIIAYSSVAHMNFVTIGMFSLNIQGIEGSILLMLSHGLVSSALFLCVGALYDRHKTRIVKYYGGLVSTMPIFSTIFLFFTLANMSLPGTSSFIGEFLILVGAFQRNSLVATLAALGMILGAAYSLWLYNRVVFGNFKPNFILKFSDLNRREVLIFLPFIVGVIWMGVYPEVFLECMHTSVSNLVQHGKFD</sequence>
<geneLocation type="mitochondrion"/>
<proteinExistence type="inferred from homology"/>
<comment type="function">
    <text evidence="1">Core subunit of the mitochondrial membrane respiratory chain NADH dehydrogenase (Complex I) that is believed to belong to the minimal assembly required for catalysis. Complex I functions in the transfer of electrons from NADH to the respiratory chain. The immediate electron acceptor for the enzyme is believed to be ubiquinone (By similarity).</text>
</comment>
<comment type="catalytic activity">
    <reaction>
        <text>a ubiquinone + NADH + 5 H(+)(in) = a ubiquinol + NAD(+) + 4 H(+)(out)</text>
        <dbReference type="Rhea" id="RHEA:29091"/>
        <dbReference type="Rhea" id="RHEA-COMP:9565"/>
        <dbReference type="Rhea" id="RHEA-COMP:9566"/>
        <dbReference type="ChEBI" id="CHEBI:15378"/>
        <dbReference type="ChEBI" id="CHEBI:16389"/>
        <dbReference type="ChEBI" id="CHEBI:17976"/>
        <dbReference type="ChEBI" id="CHEBI:57540"/>
        <dbReference type="ChEBI" id="CHEBI:57945"/>
        <dbReference type="EC" id="7.1.1.2"/>
    </reaction>
</comment>
<comment type="subcellular location">
    <subcellularLocation>
        <location evidence="1">Mitochondrion membrane</location>
        <topology evidence="1">Multi-pass membrane protein</topology>
    </subcellularLocation>
</comment>
<comment type="similarity">
    <text evidence="3">Belongs to the complex I subunit 4 family.</text>
</comment>
<feature type="chain" id="PRO_0000117953" description="NADH-ubiquinone oxidoreductase chain 4">
    <location>
        <begin position="1"/>
        <end position="495"/>
    </location>
</feature>
<feature type="transmembrane region" description="Helical" evidence="2">
    <location>
        <begin position="9"/>
        <end position="29"/>
    </location>
</feature>
<feature type="transmembrane region" description="Helical" evidence="2">
    <location>
        <begin position="37"/>
        <end position="57"/>
    </location>
</feature>
<feature type="transmembrane region" description="Helical" evidence="2">
    <location>
        <begin position="89"/>
        <end position="109"/>
    </location>
</feature>
<feature type="transmembrane region" description="Helical" evidence="2">
    <location>
        <begin position="118"/>
        <end position="138"/>
    </location>
</feature>
<feature type="transmembrane region" description="Helical" evidence="2">
    <location>
        <begin position="139"/>
        <end position="159"/>
    </location>
</feature>
<feature type="transmembrane region" description="Helical" evidence="2">
    <location>
        <begin position="173"/>
        <end position="193"/>
    </location>
</feature>
<feature type="transmembrane region" description="Helical" evidence="2">
    <location>
        <begin position="214"/>
        <end position="234"/>
    </location>
</feature>
<feature type="transmembrane region" description="Helical" evidence="2">
    <location>
        <begin position="245"/>
        <end position="265"/>
    </location>
</feature>
<feature type="transmembrane region" description="Helical" evidence="2">
    <location>
        <begin position="272"/>
        <end position="292"/>
    </location>
</feature>
<feature type="transmembrane region" description="Helical" evidence="2">
    <location>
        <begin position="307"/>
        <end position="327"/>
    </location>
</feature>
<feature type="transmembrane region" description="Helical" evidence="2">
    <location>
        <begin position="335"/>
        <end position="355"/>
    </location>
</feature>
<feature type="transmembrane region" description="Helical" evidence="2">
    <location>
        <begin position="367"/>
        <end position="387"/>
    </location>
</feature>
<feature type="transmembrane region" description="Helical" evidence="2">
    <location>
        <begin position="413"/>
        <end position="433"/>
    </location>
</feature>
<feature type="transmembrane region" description="Helical" evidence="2">
    <location>
        <begin position="457"/>
        <end position="477"/>
    </location>
</feature>
<organism>
    <name type="scientific">Marchantia polymorpha</name>
    <name type="common">Common liverwort</name>
    <name type="synonym">Marchantia aquatica</name>
    <dbReference type="NCBI Taxonomy" id="3197"/>
    <lineage>
        <taxon>Eukaryota</taxon>
        <taxon>Viridiplantae</taxon>
        <taxon>Streptophyta</taxon>
        <taxon>Embryophyta</taxon>
        <taxon>Marchantiophyta</taxon>
        <taxon>Marchantiopsida</taxon>
        <taxon>Marchantiidae</taxon>
        <taxon>Marchantiales</taxon>
        <taxon>Marchantiaceae</taxon>
        <taxon>Marchantia</taxon>
    </lineage>
</organism>
<gene>
    <name type="primary">ND4</name>
    <name type="synonym">NAD4</name>
</gene>
<accession>P26848</accession>
<dbReference type="EC" id="7.1.1.2"/>
<dbReference type="EMBL" id="M68929">
    <property type="protein sequence ID" value="AAC09398.1"/>
    <property type="molecule type" value="Genomic_DNA"/>
</dbReference>
<dbReference type="PIR" id="S25942">
    <property type="entry name" value="S25942"/>
</dbReference>
<dbReference type="RefSeq" id="NP_054401.1">
    <property type="nucleotide sequence ID" value="NC_001660.1"/>
</dbReference>
<dbReference type="SMR" id="P26848"/>
<dbReference type="GeneID" id="2702661"/>
<dbReference type="GO" id="GO:0031966">
    <property type="term" value="C:mitochondrial membrane"/>
    <property type="evidence" value="ECO:0007669"/>
    <property type="project" value="UniProtKB-SubCell"/>
</dbReference>
<dbReference type="GO" id="GO:0008137">
    <property type="term" value="F:NADH dehydrogenase (ubiquinone) activity"/>
    <property type="evidence" value="ECO:0007669"/>
    <property type="project" value="UniProtKB-EC"/>
</dbReference>
<dbReference type="GO" id="GO:0042773">
    <property type="term" value="P:ATP synthesis coupled electron transport"/>
    <property type="evidence" value="ECO:0007669"/>
    <property type="project" value="InterPro"/>
</dbReference>
<dbReference type="InterPro" id="IPR010227">
    <property type="entry name" value="NADH_Q_OxRdtase_chainM/4"/>
</dbReference>
<dbReference type="InterPro" id="IPR003918">
    <property type="entry name" value="NADH_UbQ_OxRdtase"/>
</dbReference>
<dbReference type="InterPro" id="IPR001750">
    <property type="entry name" value="ND/Mrp_TM"/>
</dbReference>
<dbReference type="NCBIfam" id="TIGR01972">
    <property type="entry name" value="NDH_I_M"/>
    <property type="match status" value="1"/>
</dbReference>
<dbReference type="NCBIfam" id="NF004499">
    <property type="entry name" value="PRK05846.1-3"/>
    <property type="match status" value="1"/>
</dbReference>
<dbReference type="PANTHER" id="PTHR43507">
    <property type="entry name" value="NADH-UBIQUINONE OXIDOREDUCTASE CHAIN 4"/>
    <property type="match status" value="1"/>
</dbReference>
<dbReference type="PANTHER" id="PTHR43507:SF1">
    <property type="entry name" value="NADH-UBIQUINONE OXIDOREDUCTASE CHAIN 4"/>
    <property type="match status" value="1"/>
</dbReference>
<dbReference type="Pfam" id="PF00361">
    <property type="entry name" value="Proton_antipo_M"/>
    <property type="match status" value="1"/>
</dbReference>
<dbReference type="PRINTS" id="PR01437">
    <property type="entry name" value="NUOXDRDTASE4"/>
</dbReference>
<protein>
    <recommendedName>
        <fullName>NADH-ubiquinone oxidoreductase chain 4</fullName>
        <ecNumber>7.1.1.2</ecNumber>
    </recommendedName>
    <alternativeName>
        <fullName>NADH dehydrogenase subunit 4</fullName>
    </alternativeName>
</protein>
<evidence type="ECO:0000250" key="1"/>
<evidence type="ECO:0000255" key="2"/>
<evidence type="ECO:0000305" key="3"/>
<reference key="1">
    <citation type="journal article" date="1992" name="J. Mol. Biol.">
        <title>Gene organization deduced from the complete sequence of liverwort Marchantia polymorpha mitochondrial DNA. A primitive form of plant mitochondrial genome.</title>
        <authorList>
            <person name="Oda K."/>
            <person name="Yamato K."/>
            <person name="Ohta E."/>
            <person name="Nakamura Y."/>
            <person name="Takemura M."/>
            <person name="Nozato N."/>
            <person name="Akashi K."/>
            <person name="Kanegae T."/>
            <person name="Ogura Y."/>
            <person name="Kohchi T."/>
            <person name="Ohyama K."/>
        </authorList>
    </citation>
    <scope>NUCLEOTIDE SEQUENCE [GENOMIC DNA]</scope>
</reference>
<reference key="2">
    <citation type="journal article" date="1993" name="Mol. Gen. Genet.">
        <title>Cotranscriptional expression of mitochondrial genes for subunits of NADH dehydrogenase, nad5, nad4, nad2, in Marchantia polymorpha.</title>
        <authorList>
            <person name="Nozato N."/>
            <person name="Oda K."/>
            <person name="Yamato K."/>
            <person name="Ohta E."/>
            <person name="Takemura M."/>
            <person name="Akashi K."/>
            <person name="Fukuzawa H."/>
            <person name="Ohyama K."/>
        </authorList>
    </citation>
    <scope>NUCLEOTIDE SEQUENCE [GENOMIC DNA]</scope>
</reference>
<name>NU4M_MARPO</name>
<keyword id="KW-0249">Electron transport</keyword>
<keyword id="KW-0472">Membrane</keyword>
<keyword id="KW-0496">Mitochondrion</keyword>
<keyword id="KW-0520">NAD</keyword>
<keyword id="KW-0679">Respiratory chain</keyword>
<keyword id="KW-1278">Translocase</keyword>
<keyword id="KW-0812">Transmembrane</keyword>
<keyword id="KW-1133">Transmembrane helix</keyword>
<keyword id="KW-0813">Transport</keyword>
<keyword id="KW-0830">Ubiquinone</keyword>